<proteinExistence type="inferred from homology"/>
<feature type="chain" id="PRO_0000176379" description="Elongation factor 4">
    <location>
        <begin position="1"/>
        <end position="602"/>
    </location>
</feature>
<feature type="domain" description="tr-type G">
    <location>
        <begin position="7"/>
        <end position="189"/>
    </location>
</feature>
<feature type="binding site" evidence="1">
    <location>
        <begin position="19"/>
        <end position="24"/>
    </location>
    <ligand>
        <name>GTP</name>
        <dbReference type="ChEBI" id="CHEBI:37565"/>
    </ligand>
</feature>
<feature type="binding site" evidence="1">
    <location>
        <begin position="136"/>
        <end position="139"/>
    </location>
    <ligand>
        <name>GTP</name>
        <dbReference type="ChEBI" id="CHEBI:37565"/>
    </ligand>
</feature>
<protein>
    <recommendedName>
        <fullName evidence="1">Elongation factor 4</fullName>
        <shortName evidence="1">EF-4</shortName>
        <ecNumber evidence="1">3.6.5.n1</ecNumber>
    </recommendedName>
    <alternativeName>
        <fullName evidence="1">Ribosomal back-translocase LepA</fullName>
    </alternativeName>
</protein>
<name>LEPA_XYLFA</name>
<comment type="function">
    <text evidence="1">Required for accurate and efficient protein synthesis under certain stress conditions. May act as a fidelity factor of the translation reaction, by catalyzing a one-codon backward translocation of tRNAs on improperly translocated ribosomes. Back-translocation proceeds from a post-translocation (POST) complex to a pre-translocation (PRE) complex, thus giving elongation factor G a second chance to translocate the tRNAs correctly. Binds to ribosomes in a GTP-dependent manner.</text>
</comment>
<comment type="catalytic activity">
    <reaction evidence="1">
        <text>GTP + H2O = GDP + phosphate + H(+)</text>
        <dbReference type="Rhea" id="RHEA:19669"/>
        <dbReference type="ChEBI" id="CHEBI:15377"/>
        <dbReference type="ChEBI" id="CHEBI:15378"/>
        <dbReference type="ChEBI" id="CHEBI:37565"/>
        <dbReference type="ChEBI" id="CHEBI:43474"/>
        <dbReference type="ChEBI" id="CHEBI:58189"/>
        <dbReference type="EC" id="3.6.5.n1"/>
    </reaction>
</comment>
<comment type="subcellular location">
    <subcellularLocation>
        <location evidence="1">Cell inner membrane</location>
        <topology evidence="1">Peripheral membrane protein</topology>
        <orientation evidence="1">Cytoplasmic side</orientation>
    </subcellularLocation>
</comment>
<comment type="similarity">
    <text evidence="1">Belongs to the TRAFAC class translation factor GTPase superfamily. Classic translation factor GTPase family. LepA subfamily.</text>
</comment>
<reference key="1">
    <citation type="journal article" date="2000" name="Nature">
        <title>The genome sequence of the plant pathogen Xylella fastidiosa.</title>
        <authorList>
            <person name="Simpson A.J.G."/>
            <person name="Reinach F.C."/>
            <person name="Arruda P."/>
            <person name="Abreu F.A."/>
            <person name="Acencio M."/>
            <person name="Alvarenga R."/>
            <person name="Alves L.M.C."/>
            <person name="Araya J.E."/>
            <person name="Baia G.S."/>
            <person name="Baptista C.S."/>
            <person name="Barros M.H."/>
            <person name="Bonaccorsi E.D."/>
            <person name="Bordin S."/>
            <person name="Bove J.M."/>
            <person name="Briones M.R.S."/>
            <person name="Bueno M.R.P."/>
            <person name="Camargo A.A."/>
            <person name="Camargo L.E.A."/>
            <person name="Carraro D.M."/>
            <person name="Carrer H."/>
            <person name="Colauto N.B."/>
            <person name="Colombo C."/>
            <person name="Costa F.F."/>
            <person name="Costa M.C.R."/>
            <person name="Costa-Neto C.M."/>
            <person name="Coutinho L.L."/>
            <person name="Cristofani M."/>
            <person name="Dias-Neto E."/>
            <person name="Docena C."/>
            <person name="El-Dorry H."/>
            <person name="Facincani A.P."/>
            <person name="Ferreira A.J.S."/>
            <person name="Ferreira V.C.A."/>
            <person name="Ferro J.A."/>
            <person name="Fraga J.S."/>
            <person name="Franca S.C."/>
            <person name="Franco M.C."/>
            <person name="Frohme M."/>
            <person name="Furlan L.R."/>
            <person name="Garnier M."/>
            <person name="Goldman G.H."/>
            <person name="Goldman M.H.S."/>
            <person name="Gomes S.L."/>
            <person name="Gruber A."/>
            <person name="Ho P.L."/>
            <person name="Hoheisel J.D."/>
            <person name="Junqueira M.L."/>
            <person name="Kemper E.L."/>
            <person name="Kitajima J.P."/>
            <person name="Krieger J.E."/>
            <person name="Kuramae E.E."/>
            <person name="Laigret F."/>
            <person name="Lambais M.R."/>
            <person name="Leite L.C.C."/>
            <person name="Lemos E.G.M."/>
            <person name="Lemos M.V.F."/>
            <person name="Lopes S.A."/>
            <person name="Lopes C.R."/>
            <person name="Machado J.A."/>
            <person name="Machado M.A."/>
            <person name="Madeira A.M.B.N."/>
            <person name="Madeira H.M.F."/>
            <person name="Marino C.L."/>
            <person name="Marques M.V."/>
            <person name="Martins E.A.L."/>
            <person name="Martins E.M.F."/>
            <person name="Matsukuma A.Y."/>
            <person name="Menck C.F.M."/>
            <person name="Miracca E.C."/>
            <person name="Miyaki C.Y."/>
            <person name="Monteiro-Vitorello C.B."/>
            <person name="Moon D.H."/>
            <person name="Nagai M.A."/>
            <person name="Nascimento A.L.T.O."/>
            <person name="Netto L.E.S."/>
            <person name="Nhani A. Jr."/>
            <person name="Nobrega F.G."/>
            <person name="Nunes L.R."/>
            <person name="Oliveira M.A."/>
            <person name="de Oliveira M.C."/>
            <person name="de Oliveira R.C."/>
            <person name="Palmieri D.A."/>
            <person name="Paris A."/>
            <person name="Peixoto B.R."/>
            <person name="Pereira G.A.G."/>
            <person name="Pereira H.A. Jr."/>
            <person name="Pesquero J.B."/>
            <person name="Quaggio R.B."/>
            <person name="Roberto P.G."/>
            <person name="Rodrigues V."/>
            <person name="de Rosa A.J.M."/>
            <person name="de Rosa V.E. Jr."/>
            <person name="de Sa R.G."/>
            <person name="Santelli R.V."/>
            <person name="Sawasaki H.E."/>
            <person name="da Silva A.C.R."/>
            <person name="da Silva A.M."/>
            <person name="da Silva F.R."/>
            <person name="Silva W.A. Jr."/>
            <person name="da Silveira J.F."/>
            <person name="Silvestri M.L.Z."/>
            <person name="Siqueira W.J."/>
            <person name="de Souza A.A."/>
            <person name="de Souza A.P."/>
            <person name="Terenzi M.F."/>
            <person name="Truffi D."/>
            <person name="Tsai S.M."/>
            <person name="Tsuhako M.H."/>
            <person name="Vallada H."/>
            <person name="Van Sluys M.A."/>
            <person name="Verjovski-Almeida S."/>
            <person name="Vettore A.L."/>
            <person name="Zago M.A."/>
            <person name="Zatz M."/>
            <person name="Meidanis J."/>
            <person name="Setubal J.C."/>
        </authorList>
    </citation>
    <scope>NUCLEOTIDE SEQUENCE [LARGE SCALE GENOMIC DNA]</scope>
    <source>
        <strain>9a5c</strain>
    </source>
</reference>
<evidence type="ECO:0000255" key="1">
    <source>
        <dbReference type="HAMAP-Rule" id="MF_00071"/>
    </source>
</evidence>
<accession>Q9PBA1</accession>
<dbReference type="EC" id="3.6.5.n1" evidence="1"/>
<dbReference type="EMBL" id="AE003849">
    <property type="protein sequence ID" value="AAF85042.1"/>
    <property type="molecule type" value="Genomic_DNA"/>
</dbReference>
<dbReference type="PIR" id="C82581">
    <property type="entry name" value="C82581"/>
</dbReference>
<dbReference type="SMR" id="Q9PBA1"/>
<dbReference type="STRING" id="160492.XF_2243"/>
<dbReference type="KEGG" id="xfa:XF_2243"/>
<dbReference type="eggNOG" id="COG0481">
    <property type="taxonomic scope" value="Bacteria"/>
</dbReference>
<dbReference type="HOGENOM" id="CLU_009995_3_3_6"/>
<dbReference type="Proteomes" id="UP000000812">
    <property type="component" value="Chromosome"/>
</dbReference>
<dbReference type="GO" id="GO:0005886">
    <property type="term" value="C:plasma membrane"/>
    <property type="evidence" value="ECO:0007669"/>
    <property type="project" value="UniProtKB-SubCell"/>
</dbReference>
<dbReference type="GO" id="GO:0005525">
    <property type="term" value="F:GTP binding"/>
    <property type="evidence" value="ECO:0007669"/>
    <property type="project" value="UniProtKB-UniRule"/>
</dbReference>
<dbReference type="GO" id="GO:0003924">
    <property type="term" value="F:GTPase activity"/>
    <property type="evidence" value="ECO:0007669"/>
    <property type="project" value="UniProtKB-UniRule"/>
</dbReference>
<dbReference type="GO" id="GO:0097216">
    <property type="term" value="F:guanosine tetraphosphate binding"/>
    <property type="evidence" value="ECO:0007669"/>
    <property type="project" value="UniProtKB-ARBA"/>
</dbReference>
<dbReference type="GO" id="GO:0043022">
    <property type="term" value="F:ribosome binding"/>
    <property type="evidence" value="ECO:0007669"/>
    <property type="project" value="UniProtKB-UniRule"/>
</dbReference>
<dbReference type="GO" id="GO:0003746">
    <property type="term" value="F:translation elongation factor activity"/>
    <property type="evidence" value="ECO:0007669"/>
    <property type="project" value="UniProtKB-UniRule"/>
</dbReference>
<dbReference type="GO" id="GO:0045727">
    <property type="term" value="P:positive regulation of translation"/>
    <property type="evidence" value="ECO:0007669"/>
    <property type="project" value="UniProtKB-UniRule"/>
</dbReference>
<dbReference type="CDD" id="cd03699">
    <property type="entry name" value="EF4_II"/>
    <property type="match status" value="1"/>
</dbReference>
<dbReference type="CDD" id="cd16260">
    <property type="entry name" value="EF4_III"/>
    <property type="match status" value="1"/>
</dbReference>
<dbReference type="CDD" id="cd01890">
    <property type="entry name" value="LepA"/>
    <property type="match status" value="1"/>
</dbReference>
<dbReference type="CDD" id="cd03709">
    <property type="entry name" value="lepA_C"/>
    <property type="match status" value="1"/>
</dbReference>
<dbReference type="FunFam" id="3.40.50.300:FF:000078">
    <property type="entry name" value="Elongation factor 4"/>
    <property type="match status" value="1"/>
</dbReference>
<dbReference type="FunFam" id="2.40.30.10:FF:000015">
    <property type="entry name" value="Translation factor GUF1, mitochondrial"/>
    <property type="match status" value="1"/>
</dbReference>
<dbReference type="FunFam" id="3.30.70.240:FF:000007">
    <property type="entry name" value="Translation factor GUF1, mitochondrial"/>
    <property type="match status" value="1"/>
</dbReference>
<dbReference type="FunFam" id="3.30.70.2570:FF:000001">
    <property type="entry name" value="Translation factor GUF1, mitochondrial"/>
    <property type="match status" value="1"/>
</dbReference>
<dbReference type="FunFam" id="3.30.70.870:FF:000004">
    <property type="entry name" value="Translation factor GUF1, mitochondrial"/>
    <property type="match status" value="1"/>
</dbReference>
<dbReference type="Gene3D" id="3.30.70.240">
    <property type="match status" value="1"/>
</dbReference>
<dbReference type="Gene3D" id="3.30.70.2570">
    <property type="entry name" value="Elongation factor 4, C-terminal domain"/>
    <property type="match status" value="1"/>
</dbReference>
<dbReference type="Gene3D" id="3.30.70.870">
    <property type="entry name" value="Elongation Factor G (Translational Gtpase), domain 3"/>
    <property type="match status" value="1"/>
</dbReference>
<dbReference type="Gene3D" id="3.40.50.300">
    <property type="entry name" value="P-loop containing nucleotide triphosphate hydrolases"/>
    <property type="match status" value="1"/>
</dbReference>
<dbReference type="Gene3D" id="2.40.30.10">
    <property type="entry name" value="Translation factors"/>
    <property type="match status" value="1"/>
</dbReference>
<dbReference type="HAMAP" id="MF_00071">
    <property type="entry name" value="LepA"/>
    <property type="match status" value="1"/>
</dbReference>
<dbReference type="InterPro" id="IPR006297">
    <property type="entry name" value="EF-4"/>
</dbReference>
<dbReference type="InterPro" id="IPR035647">
    <property type="entry name" value="EFG_III/V"/>
</dbReference>
<dbReference type="InterPro" id="IPR000640">
    <property type="entry name" value="EFG_V-like"/>
</dbReference>
<dbReference type="InterPro" id="IPR004161">
    <property type="entry name" value="EFTu-like_2"/>
</dbReference>
<dbReference type="InterPro" id="IPR031157">
    <property type="entry name" value="G_TR_CS"/>
</dbReference>
<dbReference type="InterPro" id="IPR038363">
    <property type="entry name" value="LepA_C_sf"/>
</dbReference>
<dbReference type="InterPro" id="IPR013842">
    <property type="entry name" value="LepA_CTD"/>
</dbReference>
<dbReference type="InterPro" id="IPR035654">
    <property type="entry name" value="LepA_IV"/>
</dbReference>
<dbReference type="InterPro" id="IPR027417">
    <property type="entry name" value="P-loop_NTPase"/>
</dbReference>
<dbReference type="InterPro" id="IPR005225">
    <property type="entry name" value="Small_GTP-bd"/>
</dbReference>
<dbReference type="InterPro" id="IPR000795">
    <property type="entry name" value="T_Tr_GTP-bd_dom"/>
</dbReference>
<dbReference type="InterPro" id="IPR009000">
    <property type="entry name" value="Transl_B-barrel_sf"/>
</dbReference>
<dbReference type="NCBIfam" id="TIGR01393">
    <property type="entry name" value="lepA"/>
    <property type="match status" value="1"/>
</dbReference>
<dbReference type="NCBIfam" id="TIGR00231">
    <property type="entry name" value="small_GTP"/>
    <property type="match status" value="1"/>
</dbReference>
<dbReference type="PANTHER" id="PTHR43512:SF4">
    <property type="entry name" value="TRANSLATION FACTOR GUF1 HOMOLOG, CHLOROPLASTIC"/>
    <property type="match status" value="1"/>
</dbReference>
<dbReference type="PANTHER" id="PTHR43512">
    <property type="entry name" value="TRANSLATION FACTOR GUF1-RELATED"/>
    <property type="match status" value="1"/>
</dbReference>
<dbReference type="Pfam" id="PF00679">
    <property type="entry name" value="EFG_C"/>
    <property type="match status" value="1"/>
</dbReference>
<dbReference type="Pfam" id="PF00009">
    <property type="entry name" value="GTP_EFTU"/>
    <property type="match status" value="1"/>
</dbReference>
<dbReference type="Pfam" id="PF03144">
    <property type="entry name" value="GTP_EFTU_D2"/>
    <property type="match status" value="1"/>
</dbReference>
<dbReference type="Pfam" id="PF06421">
    <property type="entry name" value="LepA_C"/>
    <property type="match status" value="1"/>
</dbReference>
<dbReference type="PRINTS" id="PR00315">
    <property type="entry name" value="ELONGATNFCT"/>
</dbReference>
<dbReference type="SMART" id="SM00838">
    <property type="entry name" value="EFG_C"/>
    <property type="match status" value="1"/>
</dbReference>
<dbReference type="SUPFAM" id="SSF54980">
    <property type="entry name" value="EF-G C-terminal domain-like"/>
    <property type="match status" value="2"/>
</dbReference>
<dbReference type="SUPFAM" id="SSF52540">
    <property type="entry name" value="P-loop containing nucleoside triphosphate hydrolases"/>
    <property type="match status" value="1"/>
</dbReference>
<dbReference type="SUPFAM" id="SSF50447">
    <property type="entry name" value="Translation proteins"/>
    <property type="match status" value="1"/>
</dbReference>
<dbReference type="PROSITE" id="PS00301">
    <property type="entry name" value="G_TR_1"/>
    <property type="match status" value="1"/>
</dbReference>
<dbReference type="PROSITE" id="PS51722">
    <property type="entry name" value="G_TR_2"/>
    <property type="match status" value="1"/>
</dbReference>
<gene>
    <name evidence="1" type="primary">lepA</name>
    <name type="ordered locus">XF_2243</name>
</gene>
<keyword id="KW-0997">Cell inner membrane</keyword>
<keyword id="KW-1003">Cell membrane</keyword>
<keyword id="KW-0342">GTP-binding</keyword>
<keyword id="KW-0378">Hydrolase</keyword>
<keyword id="KW-0472">Membrane</keyword>
<keyword id="KW-0547">Nucleotide-binding</keyword>
<keyword id="KW-0648">Protein biosynthesis</keyword>
<sequence>MSSDPMRNIRNFSIIAHVDHGKSTLADRIIQLCGGLEAREMEAQVLDSNPIERERGITIKAQSVSLLYKAQDGQNYHLNLIDTPGHVDFSYEVSRSLAACEGALLVVDASQGVEAQSVANCYTAVEQGLEVVPILNKIDLPTADTERAKAEIEAVIGIDASEAVAVSAKTGLYVEQVLEAIVQRIPAPQPRDTEKLQALIIDSWFDNYLGVVSLVRVMQGEITPGAKLLVMSTGRSHPVDAVGVFTPKRKTLAKLTAGEVGWVTASIKDVHGAPVGDTLTLANDPAPKPLPGFQEVQPRVFAGLFPVDAEDYPDLREALEKLRLNDAALRFEPENSEAMGFGFRCGFLGMLHMEIVQERLEREYDLNLITTAPTVIYEVLKTDGTLVAMDNPAKMPPINQINEIREPIIRSNILTPPEYVGAVITLCEEKRGSQIGITYLGNQVQVAYELPMAEVVLDFFDKLKSVTRGYASLDYHFLRFQEGPFVRVDTLINGDRVDALSVIVHRHQAERRGRELCEKMKDLIPRQMFDVAIQAAIGSQIISRSTVKAMRKNVLAKCYGGDISRKKKLLEKQKEGKKRMKQIGRVEIPQEAFLAVLQIDNK</sequence>
<organism>
    <name type="scientific">Xylella fastidiosa (strain 9a5c)</name>
    <dbReference type="NCBI Taxonomy" id="160492"/>
    <lineage>
        <taxon>Bacteria</taxon>
        <taxon>Pseudomonadati</taxon>
        <taxon>Pseudomonadota</taxon>
        <taxon>Gammaproteobacteria</taxon>
        <taxon>Lysobacterales</taxon>
        <taxon>Lysobacteraceae</taxon>
        <taxon>Xylella</taxon>
    </lineage>
</organism>